<protein>
    <recommendedName>
        <fullName evidence="3">Olfactory receptor 5B21</fullName>
    </recommendedName>
</protein>
<reference key="1">
    <citation type="journal article" date="2006" name="Nature">
        <title>Human chromosome 11 DNA sequence and analysis including novel gene identification.</title>
        <authorList>
            <person name="Taylor T.D."/>
            <person name="Noguchi H."/>
            <person name="Totoki Y."/>
            <person name="Toyoda A."/>
            <person name="Kuroki Y."/>
            <person name="Dewar K."/>
            <person name="Lloyd C."/>
            <person name="Itoh T."/>
            <person name="Takeda T."/>
            <person name="Kim D.-W."/>
            <person name="She X."/>
            <person name="Barlow K.F."/>
            <person name="Bloom T."/>
            <person name="Bruford E."/>
            <person name="Chang J.L."/>
            <person name="Cuomo C.A."/>
            <person name="Eichler E."/>
            <person name="FitzGerald M.G."/>
            <person name="Jaffe D.B."/>
            <person name="LaButti K."/>
            <person name="Nicol R."/>
            <person name="Park H.-S."/>
            <person name="Seaman C."/>
            <person name="Sougnez C."/>
            <person name="Yang X."/>
            <person name="Zimmer A.R."/>
            <person name="Zody M.C."/>
            <person name="Birren B.W."/>
            <person name="Nusbaum C."/>
            <person name="Fujiyama A."/>
            <person name="Hattori M."/>
            <person name="Rogers J."/>
            <person name="Lander E.S."/>
            <person name="Sakaki Y."/>
        </authorList>
    </citation>
    <scope>NUCLEOTIDE SEQUENCE [LARGE SCALE GENOMIC DNA]</scope>
</reference>
<sequence length="309" mass="34174">MENSTEVTEFILLGLTDDPNLQIPLLLAFLFIYLITLLGNGGMMVIIHSDSHLHTPMYFFLSNLSLVDLGYSSAVAPKTVAALRSGDKAISYDGCAAQFFFFVGFATVECYLLASMAYDRHAAVCRPLHYTTTMTAGVCALLATGSYVSGFLNASIHAAGTFRLSFCGSNEINHFFCDIPPLLALSCSDTRISKLVVFVAGFNVFFTLLVILISYFFICITIQRMHSAEGQKKVFSTCASHLTALSIFYGTIIFMYLQPNSSQSVDTDKIASVFYTVVIPMLNPLIYSLRNKEVKSALWKILNKLYPQY</sequence>
<comment type="function">
    <text evidence="3">Odorant receptor.</text>
</comment>
<comment type="subcellular location">
    <subcellularLocation>
        <location evidence="3">Cell membrane</location>
        <topology evidence="1">Multi-pass membrane protein</topology>
    </subcellularLocation>
</comment>
<comment type="similarity">
    <text evidence="2">Belongs to the G-protein coupled receptor 1 family.</text>
</comment>
<comment type="online information" name="Human Olfactory Receptor Data Exploratorium (HORDE)">
    <link uri="http://genome.weizmann.ac.il/horde/card/index/symbol:OR5B21"/>
</comment>
<evidence type="ECO:0000255" key="1"/>
<evidence type="ECO:0000255" key="2">
    <source>
        <dbReference type="PROSITE-ProRule" id="PRU00521"/>
    </source>
</evidence>
<evidence type="ECO:0000305" key="3"/>
<evidence type="ECO:0000312" key="4">
    <source>
        <dbReference type="HGNC" id="HGNC:19616"/>
    </source>
</evidence>
<keyword id="KW-1003">Cell membrane</keyword>
<keyword id="KW-1015">Disulfide bond</keyword>
<keyword id="KW-0297">G-protein coupled receptor</keyword>
<keyword id="KW-0325">Glycoprotein</keyword>
<keyword id="KW-0472">Membrane</keyword>
<keyword id="KW-0552">Olfaction</keyword>
<keyword id="KW-0675">Receptor</keyword>
<keyword id="KW-1185">Reference proteome</keyword>
<keyword id="KW-0716">Sensory transduction</keyword>
<keyword id="KW-0807">Transducer</keyword>
<keyword id="KW-0812">Transmembrane</keyword>
<keyword id="KW-1133">Transmembrane helix</keyword>
<name>O5B21_HUMAN</name>
<dbReference type="EMBL" id="AP003557">
    <property type="status" value="NOT_ANNOTATED_CDS"/>
    <property type="molecule type" value="Genomic_DNA"/>
</dbReference>
<dbReference type="CCDS" id="CCDS31552.1"/>
<dbReference type="RefSeq" id="NP_001005218.1">
    <property type="nucleotide sequence ID" value="NM_001005218.3"/>
</dbReference>
<dbReference type="SMR" id="A6NL26"/>
<dbReference type="FunCoup" id="A6NL26">
    <property type="interactions" value="416"/>
</dbReference>
<dbReference type="STRING" id="9606.ENSP00000353537"/>
<dbReference type="GlyCosmos" id="A6NL26">
    <property type="glycosylation" value="2 sites, No reported glycans"/>
</dbReference>
<dbReference type="GlyGen" id="A6NL26">
    <property type="glycosylation" value="2 sites"/>
</dbReference>
<dbReference type="iPTMnet" id="A6NL26"/>
<dbReference type="PhosphoSitePlus" id="A6NL26"/>
<dbReference type="BioMuta" id="OR5B21"/>
<dbReference type="MassIVE" id="A6NL26"/>
<dbReference type="PaxDb" id="9606-ENSP00000353537"/>
<dbReference type="Antibodypedia" id="27658">
    <property type="antibodies" value="7 antibodies from 7 providers"/>
</dbReference>
<dbReference type="DNASU" id="219968"/>
<dbReference type="Ensembl" id="ENST00000360374.3">
    <property type="protein sequence ID" value="ENSP00000353537.2"/>
    <property type="gene ID" value="ENSG00000198283.3"/>
</dbReference>
<dbReference type="GeneID" id="219968"/>
<dbReference type="KEGG" id="hsa:219968"/>
<dbReference type="MANE-Select" id="ENST00000360374.3">
    <property type="protein sequence ID" value="ENSP00000353537.2"/>
    <property type="RefSeq nucleotide sequence ID" value="NM_001005218.3"/>
    <property type="RefSeq protein sequence ID" value="NP_001005218.1"/>
</dbReference>
<dbReference type="UCSC" id="uc010rki.3">
    <property type="organism name" value="human"/>
</dbReference>
<dbReference type="AGR" id="HGNC:19616"/>
<dbReference type="CTD" id="219968"/>
<dbReference type="DisGeNET" id="219968"/>
<dbReference type="GeneCards" id="OR5B21"/>
<dbReference type="HGNC" id="HGNC:19616">
    <property type="gene designation" value="OR5B21"/>
</dbReference>
<dbReference type="HPA" id="ENSG00000198283">
    <property type="expression patterns" value="Not detected"/>
</dbReference>
<dbReference type="neXtProt" id="NX_A6NL26"/>
<dbReference type="OpenTargets" id="ENSG00000198283"/>
<dbReference type="PharmGKB" id="PA134867164"/>
<dbReference type="VEuPathDB" id="HostDB:ENSG00000198283"/>
<dbReference type="eggNOG" id="ENOG502SKXC">
    <property type="taxonomic scope" value="Eukaryota"/>
</dbReference>
<dbReference type="GeneTree" id="ENSGT01120000271832"/>
<dbReference type="HOGENOM" id="CLU_012526_1_0_1"/>
<dbReference type="InParanoid" id="A6NL26"/>
<dbReference type="OMA" id="FCVVGFN"/>
<dbReference type="OrthoDB" id="5964498at2759"/>
<dbReference type="PAN-GO" id="A6NL26">
    <property type="GO annotations" value="4 GO annotations based on evolutionary models"/>
</dbReference>
<dbReference type="PhylomeDB" id="A6NL26"/>
<dbReference type="TreeFam" id="TF352753"/>
<dbReference type="PathwayCommons" id="A6NL26"/>
<dbReference type="Reactome" id="R-HSA-9752946">
    <property type="pathway name" value="Expression and translocation of olfactory receptors"/>
</dbReference>
<dbReference type="SignaLink" id="A6NL26"/>
<dbReference type="SIGNOR" id="A6NL26"/>
<dbReference type="BioGRID-ORCS" id="219968">
    <property type="hits" value="15 hits in 746 CRISPR screens"/>
</dbReference>
<dbReference type="GenomeRNAi" id="219968"/>
<dbReference type="Pharos" id="A6NL26">
    <property type="development level" value="Tdark"/>
</dbReference>
<dbReference type="PRO" id="PR:A6NL26"/>
<dbReference type="Proteomes" id="UP000005640">
    <property type="component" value="Chromosome 11"/>
</dbReference>
<dbReference type="RNAct" id="A6NL26">
    <property type="molecule type" value="protein"/>
</dbReference>
<dbReference type="Bgee" id="ENSG00000198283">
    <property type="expression patterns" value="Expressed in primordial germ cell in gonad and 2 other cell types or tissues"/>
</dbReference>
<dbReference type="GO" id="GO:0005886">
    <property type="term" value="C:plasma membrane"/>
    <property type="evidence" value="ECO:0007669"/>
    <property type="project" value="UniProtKB-SubCell"/>
</dbReference>
<dbReference type="GO" id="GO:0004930">
    <property type="term" value="F:G protein-coupled receptor activity"/>
    <property type="evidence" value="ECO:0007669"/>
    <property type="project" value="UniProtKB-KW"/>
</dbReference>
<dbReference type="GO" id="GO:0005549">
    <property type="term" value="F:odorant binding"/>
    <property type="evidence" value="ECO:0000318"/>
    <property type="project" value="GO_Central"/>
</dbReference>
<dbReference type="GO" id="GO:0004984">
    <property type="term" value="F:olfactory receptor activity"/>
    <property type="evidence" value="ECO:0000318"/>
    <property type="project" value="GO_Central"/>
</dbReference>
<dbReference type="GO" id="GO:0007186">
    <property type="term" value="P:G protein-coupled receptor signaling pathway"/>
    <property type="evidence" value="ECO:0000318"/>
    <property type="project" value="GO_Central"/>
</dbReference>
<dbReference type="GO" id="GO:0007608">
    <property type="term" value="P:sensory perception of smell"/>
    <property type="evidence" value="ECO:0000318"/>
    <property type="project" value="GO_Central"/>
</dbReference>
<dbReference type="CDD" id="cd15407">
    <property type="entry name" value="7tmA_OR5B-like"/>
    <property type="match status" value="1"/>
</dbReference>
<dbReference type="FunFam" id="1.10.1220.70:FF:000001">
    <property type="entry name" value="Olfactory receptor"/>
    <property type="match status" value="1"/>
</dbReference>
<dbReference type="FunFam" id="1.20.1070.10:FF:000003">
    <property type="entry name" value="Olfactory receptor"/>
    <property type="match status" value="1"/>
</dbReference>
<dbReference type="Gene3D" id="1.20.1070.10">
    <property type="entry name" value="Rhodopsin 7-helix transmembrane proteins"/>
    <property type="match status" value="1"/>
</dbReference>
<dbReference type="InterPro" id="IPR000276">
    <property type="entry name" value="GPCR_Rhodpsn"/>
</dbReference>
<dbReference type="InterPro" id="IPR017452">
    <property type="entry name" value="GPCR_Rhodpsn_7TM"/>
</dbReference>
<dbReference type="InterPro" id="IPR000725">
    <property type="entry name" value="Olfact_rcpt"/>
</dbReference>
<dbReference type="PANTHER" id="PTHR48018">
    <property type="entry name" value="OLFACTORY RECEPTOR"/>
    <property type="match status" value="1"/>
</dbReference>
<dbReference type="Pfam" id="PF13853">
    <property type="entry name" value="7tm_4"/>
    <property type="match status" value="1"/>
</dbReference>
<dbReference type="PRINTS" id="PR00237">
    <property type="entry name" value="GPCRRHODOPSN"/>
</dbReference>
<dbReference type="PRINTS" id="PR00245">
    <property type="entry name" value="OLFACTORYR"/>
</dbReference>
<dbReference type="SUPFAM" id="SSF81321">
    <property type="entry name" value="Family A G protein-coupled receptor-like"/>
    <property type="match status" value="1"/>
</dbReference>
<dbReference type="PROSITE" id="PS00237">
    <property type="entry name" value="G_PROTEIN_RECEP_F1_1"/>
    <property type="match status" value="1"/>
</dbReference>
<dbReference type="PROSITE" id="PS50262">
    <property type="entry name" value="G_PROTEIN_RECEP_F1_2"/>
    <property type="match status" value="1"/>
</dbReference>
<gene>
    <name evidence="4" type="primary">OR5B21</name>
</gene>
<organism>
    <name type="scientific">Homo sapiens</name>
    <name type="common">Human</name>
    <dbReference type="NCBI Taxonomy" id="9606"/>
    <lineage>
        <taxon>Eukaryota</taxon>
        <taxon>Metazoa</taxon>
        <taxon>Chordata</taxon>
        <taxon>Craniata</taxon>
        <taxon>Vertebrata</taxon>
        <taxon>Euteleostomi</taxon>
        <taxon>Mammalia</taxon>
        <taxon>Eutheria</taxon>
        <taxon>Euarchontoglires</taxon>
        <taxon>Primates</taxon>
        <taxon>Haplorrhini</taxon>
        <taxon>Catarrhini</taxon>
        <taxon>Hominidae</taxon>
        <taxon>Homo</taxon>
    </lineage>
</organism>
<accession>A6NL26</accession>
<feature type="chain" id="PRO_0000310474" description="Olfactory receptor 5B21">
    <location>
        <begin position="1"/>
        <end position="309"/>
    </location>
</feature>
<feature type="topological domain" description="Extracellular" evidence="1">
    <location>
        <begin position="1"/>
        <end position="26"/>
    </location>
</feature>
<feature type="transmembrane region" description="Helical; Name=1" evidence="1">
    <location>
        <begin position="27"/>
        <end position="47"/>
    </location>
</feature>
<feature type="topological domain" description="Cytoplasmic" evidence="1">
    <location>
        <begin position="48"/>
        <end position="55"/>
    </location>
</feature>
<feature type="transmembrane region" description="Helical; Name=2" evidence="1">
    <location>
        <begin position="56"/>
        <end position="76"/>
    </location>
</feature>
<feature type="topological domain" description="Extracellular" evidence="1">
    <location>
        <begin position="77"/>
        <end position="95"/>
    </location>
</feature>
<feature type="transmembrane region" description="Helical; Name=3" evidence="1">
    <location>
        <begin position="96"/>
        <end position="116"/>
    </location>
</feature>
<feature type="topological domain" description="Cytoplasmic" evidence="1">
    <location>
        <begin position="117"/>
        <end position="137"/>
    </location>
</feature>
<feature type="transmembrane region" description="Helical; Name=4" evidence="1">
    <location>
        <begin position="138"/>
        <end position="158"/>
    </location>
</feature>
<feature type="topological domain" description="Extracellular" evidence="1">
    <location>
        <begin position="159"/>
        <end position="199"/>
    </location>
</feature>
<feature type="transmembrane region" description="Helical; Name=5" evidence="1">
    <location>
        <begin position="200"/>
        <end position="220"/>
    </location>
</feature>
<feature type="topological domain" description="Cytoplasmic" evidence="1">
    <location>
        <begin position="221"/>
        <end position="235"/>
    </location>
</feature>
<feature type="transmembrane region" description="Helical; Name=6" evidence="1">
    <location>
        <begin position="236"/>
        <end position="256"/>
    </location>
</feature>
<feature type="topological domain" description="Extracellular" evidence="1">
    <location>
        <begin position="257"/>
        <end position="270"/>
    </location>
</feature>
<feature type="transmembrane region" description="Helical; Name=7" evidence="1">
    <location>
        <begin position="271"/>
        <end position="291"/>
    </location>
</feature>
<feature type="topological domain" description="Cytoplasmic" evidence="1">
    <location>
        <begin position="292"/>
        <end position="309"/>
    </location>
</feature>
<feature type="glycosylation site" description="N-linked (GlcNAc...) asparagine" evidence="1">
    <location>
        <position position="3"/>
    </location>
</feature>
<feature type="glycosylation site" description="N-linked (GlcNAc...) asparagine" evidence="1">
    <location>
        <position position="260"/>
    </location>
</feature>
<feature type="disulfide bond" evidence="2">
    <location>
        <begin position="95"/>
        <end position="177"/>
    </location>
</feature>
<feature type="sequence variant" id="VAR_062041" description="In dbSNP:rs58454093.">
    <original>S</original>
    <variation>Y</variation>
    <location>
        <position position="272"/>
    </location>
</feature>
<proteinExistence type="inferred from homology"/>